<proteinExistence type="evidence at protein level"/>
<name>PRS4_YEAST</name>
<accession>P40327</accession>
<accession>D6VRY1</accession>
<gene>
    <name type="primary">RPT2</name>
    <name type="synonym">YHS4</name>
    <name type="synonym">YTA5</name>
    <name type="ordered locus">YDL007W</name>
    <name type="ORF">D2920</name>
</gene>
<feature type="initiator methionine" description="Removed" evidence="4">
    <location>
        <position position="1"/>
    </location>
</feature>
<feature type="chain" id="PRO_0000084685" description="26S proteasome regulatory subunit 4 homolog">
    <location>
        <begin position="2"/>
        <end position="437"/>
    </location>
</feature>
<feature type="region of interest" description="Disordered" evidence="3">
    <location>
        <begin position="1"/>
        <end position="47"/>
    </location>
</feature>
<feature type="binding site" evidence="2">
    <location>
        <begin position="223"/>
        <end position="230"/>
    </location>
    <ligand>
        <name>ATP</name>
        <dbReference type="ChEBI" id="CHEBI:30616"/>
    </ligand>
</feature>
<feature type="lipid moiety-binding region" description="N-myristoyl glycine" evidence="4">
    <location>
        <position position="2"/>
    </location>
</feature>
<feature type="cross-link" description="Glycyl lysine isopeptide (Lys-Gly) (interchain with G-Cter in ubiquitin)" evidence="7">
    <location>
        <position position="234"/>
    </location>
</feature>
<feature type="cross-link" description="Glycyl lysine isopeptide (Lys-Gly) (interchain with G-Cter in ubiquitin)" evidence="7">
    <location>
        <position position="255"/>
    </location>
</feature>
<feature type="cross-link" description="Glycyl lysine isopeptide (Lys-Gly) (interchain with G-Cter in ubiquitin)" evidence="7">
    <location>
        <position position="290"/>
    </location>
</feature>
<feature type="mutagenesis site" description="73% loss of ATPase activity." evidence="5">
    <original>K</original>
    <variation>Q</variation>
    <location>
        <position position="229"/>
    </location>
</feature>
<feature type="sequence conflict" description="In Ref. 2; AAA97498." evidence="6" ref="2">
    <original>K</original>
    <variation>N</variation>
    <location>
        <position position="347"/>
    </location>
</feature>
<sequence>MGQGVSSGQDKKKKKGSNQKPKYEPPVQSKFGRKKRKGGPATAEKLPNIYPSTRCKLKLLRMERIKDHLLLEEEFVSNSEILKPFEKKQEEEKKQLEEIRGNPLSIGTLEEIIDDDHAIVTSPTMPDYYVSILSFVDKELLEPGCSVLLHHKTMSIVGVLQDDADPMVSVMKMDKSPTESYSDIGGLESQIQEIKESVELPLTHPELYEEMGIKPPKGVILYGAPGTGKTLLAKAVANQTSATFLRIVGSELIQKYLGDGPRLCRQIFKVAGENAPSIVFIDEIDAIGTKRYDSNSGGEREIQRTMLELLNQLDGFDDRGDVKVIMATNKIETLDPALIRPGRIDRKILFENPDLSTKKKILGIHTSKMNLSEDVNLETLVTTKDDLSGADIQAMCTEAGLLALRERRMQVTAEDFKQAKERVMKNKVEENLEGLYL</sequence>
<dbReference type="EMBL" id="X81070">
    <property type="protein sequence ID" value="CAA56957.1"/>
    <property type="molecule type" value="Genomic_DNA"/>
</dbReference>
<dbReference type="EMBL" id="L17040">
    <property type="protein sequence ID" value="AAA97498.1"/>
    <property type="molecule type" value="Genomic_DNA"/>
</dbReference>
<dbReference type="EMBL" id="Z48432">
    <property type="protein sequence ID" value="CAA88352.1"/>
    <property type="molecule type" value="Genomic_DNA"/>
</dbReference>
<dbReference type="EMBL" id="Z74055">
    <property type="protein sequence ID" value="CAA98563.1"/>
    <property type="molecule type" value="Genomic_DNA"/>
</dbReference>
<dbReference type="EMBL" id="BK006938">
    <property type="protein sequence ID" value="DAA11841.1"/>
    <property type="molecule type" value="Genomic_DNA"/>
</dbReference>
<dbReference type="PIR" id="S46613">
    <property type="entry name" value="S46613"/>
</dbReference>
<dbReference type="RefSeq" id="NP_010277.1">
    <property type="nucleotide sequence ID" value="NM_001180066.1"/>
</dbReference>
<dbReference type="PDB" id="3JCO">
    <property type="method" value="EM"/>
    <property type="resolution" value="4.80 A"/>
    <property type="chains" value="I=1-437"/>
</dbReference>
<dbReference type="PDB" id="3JCP">
    <property type="method" value="EM"/>
    <property type="resolution" value="4.60 A"/>
    <property type="chains" value="I=1-437"/>
</dbReference>
<dbReference type="PDB" id="4CR2">
    <property type="method" value="EM"/>
    <property type="resolution" value="7.70 A"/>
    <property type="chains" value="I=1-437"/>
</dbReference>
<dbReference type="PDB" id="4CR3">
    <property type="method" value="EM"/>
    <property type="resolution" value="9.30 A"/>
    <property type="chains" value="I=1-437"/>
</dbReference>
<dbReference type="PDB" id="4CR4">
    <property type="method" value="EM"/>
    <property type="resolution" value="8.80 A"/>
    <property type="chains" value="I=1-437"/>
</dbReference>
<dbReference type="PDB" id="5A5B">
    <property type="method" value="EM"/>
    <property type="resolution" value="9.50 A"/>
    <property type="chains" value="I=1-437"/>
</dbReference>
<dbReference type="PDB" id="5MP9">
    <property type="method" value="EM"/>
    <property type="resolution" value="4.10 A"/>
    <property type="chains" value="I=1-437"/>
</dbReference>
<dbReference type="PDB" id="5MPA">
    <property type="method" value="EM"/>
    <property type="resolution" value="4.50 A"/>
    <property type="chains" value="I=1-437"/>
</dbReference>
<dbReference type="PDB" id="5MPB">
    <property type="method" value="EM"/>
    <property type="resolution" value="7.80 A"/>
    <property type="chains" value="I=1-437"/>
</dbReference>
<dbReference type="PDB" id="5MPC">
    <property type="method" value="EM"/>
    <property type="resolution" value="7.70 A"/>
    <property type="chains" value="I=1-437"/>
</dbReference>
<dbReference type="PDB" id="5WVI">
    <property type="method" value="EM"/>
    <property type="resolution" value="6.30 A"/>
    <property type="chains" value="I=1-437"/>
</dbReference>
<dbReference type="PDB" id="5WVK">
    <property type="method" value="EM"/>
    <property type="resolution" value="4.20 A"/>
    <property type="chains" value="I=1-437"/>
</dbReference>
<dbReference type="PDB" id="6EF0">
    <property type="method" value="EM"/>
    <property type="resolution" value="4.43 A"/>
    <property type="chains" value="I=166-436"/>
</dbReference>
<dbReference type="PDB" id="6EF1">
    <property type="method" value="EM"/>
    <property type="resolution" value="4.73 A"/>
    <property type="chains" value="I=167-437"/>
</dbReference>
<dbReference type="PDB" id="6EF2">
    <property type="method" value="EM"/>
    <property type="resolution" value="4.27 A"/>
    <property type="chains" value="I=178-437"/>
</dbReference>
<dbReference type="PDB" id="6EF3">
    <property type="method" value="EM"/>
    <property type="resolution" value="4.17 A"/>
    <property type="chains" value="I=1-437"/>
</dbReference>
<dbReference type="PDB" id="6FVT">
    <property type="method" value="EM"/>
    <property type="resolution" value="4.10 A"/>
    <property type="chains" value="I=53-437"/>
</dbReference>
<dbReference type="PDB" id="6FVU">
    <property type="method" value="EM"/>
    <property type="resolution" value="4.50 A"/>
    <property type="chains" value="I=54-437"/>
</dbReference>
<dbReference type="PDB" id="6FVV">
    <property type="method" value="EM"/>
    <property type="resolution" value="5.40 A"/>
    <property type="chains" value="I=53-437"/>
</dbReference>
<dbReference type="PDB" id="6FVW">
    <property type="method" value="EM"/>
    <property type="resolution" value="4.50 A"/>
    <property type="chains" value="I=53-437"/>
</dbReference>
<dbReference type="PDB" id="6FVX">
    <property type="method" value="EM"/>
    <property type="resolution" value="4.90 A"/>
    <property type="chains" value="I=53-437"/>
</dbReference>
<dbReference type="PDB" id="6FVY">
    <property type="method" value="EM"/>
    <property type="resolution" value="6.10 A"/>
    <property type="chains" value="I=53-437"/>
</dbReference>
<dbReference type="PDB" id="6J2C">
    <property type="method" value="EM"/>
    <property type="resolution" value="7.00 A"/>
    <property type="chains" value="I=1-437"/>
</dbReference>
<dbReference type="PDB" id="6J2N">
    <property type="method" value="EM"/>
    <property type="resolution" value="7.50 A"/>
    <property type="chains" value="I=1-437"/>
</dbReference>
<dbReference type="PDB" id="6J2Q">
    <property type="method" value="EM"/>
    <property type="resolution" value="3.80 A"/>
    <property type="chains" value="I=1-437"/>
</dbReference>
<dbReference type="PDB" id="6J2X">
    <property type="method" value="EM"/>
    <property type="resolution" value="3.80 A"/>
    <property type="chains" value="I=1-437"/>
</dbReference>
<dbReference type="PDB" id="6J30">
    <property type="method" value="EM"/>
    <property type="resolution" value="4.50 A"/>
    <property type="chains" value="I=1-437"/>
</dbReference>
<dbReference type="PDB" id="7QO4">
    <property type="method" value="EM"/>
    <property type="resolution" value="7.00 A"/>
    <property type="chains" value="I=1-437"/>
</dbReference>
<dbReference type="PDB" id="7QO5">
    <property type="method" value="EM"/>
    <property type="resolution" value="6.00 A"/>
    <property type="chains" value="I=1-437"/>
</dbReference>
<dbReference type="PDBsum" id="3JCO"/>
<dbReference type="PDBsum" id="3JCP"/>
<dbReference type="PDBsum" id="4CR2"/>
<dbReference type="PDBsum" id="4CR3"/>
<dbReference type="PDBsum" id="4CR4"/>
<dbReference type="PDBsum" id="5A5B"/>
<dbReference type="PDBsum" id="5MP9"/>
<dbReference type="PDBsum" id="5MPA"/>
<dbReference type="PDBsum" id="5MPB"/>
<dbReference type="PDBsum" id="5MPC"/>
<dbReference type="PDBsum" id="5WVI"/>
<dbReference type="PDBsum" id="5WVK"/>
<dbReference type="PDBsum" id="6EF0"/>
<dbReference type="PDBsum" id="6EF1"/>
<dbReference type="PDBsum" id="6EF2"/>
<dbReference type="PDBsum" id="6EF3"/>
<dbReference type="PDBsum" id="6FVT"/>
<dbReference type="PDBsum" id="6FVU"/>
<dbReference type="PDBsum" id="6FVV"/>
<dbReference type="PDBsum" id="6FVW"/>
<dbReference type="PDBsum" id="6FVX"/>
<dbReference type="PDBsum" id="6FVY"/>
<dbReference type="PDBsum" id="6J2C"/>
<dbReference type="PDBsum" id="6J2N"/>
<dbReference type="PDBsum" id="6J2Q"/>
<dbReference type="PDBsum" id="6J2X"/>
<dbReference type="PDBsum" id="6J30"/>
<dbReference type="PDBsum" id="7QO4"/>
<dbReference type="PDBsum" id="7QO5"/>
<dbReference type="EMDB" id="EMD-14084"/>
<dbReference type="EMDB" id="EMD-3534"/>
<dbReference type="EMDB" id="EMD-3535"/>
<dbReference type="EMDB" id="EMD-3536"/>
<dbReference type="EMDB" id="EMD-3537"/>
<dbReference type="EMDB" id="EMD-4321"/>
<dbReference type="EMDB" id="EMD-4322"/>
<dbReference type="EMDB" id="EMD-4323"/>
<dbReference type="EMDB" id="EMD-4324"/>
<dbReference type="EMDB" id="EMD-6693"/>
<dbReference type="EMDB" id="EMD-6694"/>
<dbReference type="EMDB" id="EMD-9042"/>
<dbReference type="EMDB" id="EMD-9043"/>
<dbReference type="EMDB" id="EMD-9044"/>
<dbReference type="EMDB" id="EMD-9045"/>
<dbReference type="EMDB" id="EMD-9769"/>
<dbReference type="EMDB" id="EMD-9770"/>
<dbReference type="EMDB" id="EMD-9771"/>
<dbReference type="EMDB" id="EMD-9772"/>
<dbReference type="EMDB" id="EMD-9773"/>
<dbReference type="SMR" id="P40327"/>
<dbReference type="BioGRID" id="32047">
    <property type="interactions" value="483"/>
</dbReference>
<dbReference type="ComplexPortal" id="CPX-2262">
    <property type="entry name" value="26S proteasome complex"/>
</dbReference>
<dbReference type="DIP" id="DIP-6282N"/>
<dbReference type="FunCoup" id="P40327">
    <property type="interactions" value="1246"/>
</dbReference>
<dbReference type="IntAct" id="P40327">
    <property type="interactions" value="64"/>
</dbReference>
<dbReference type="MINT" id="P40327"/>
<dbReference type="STRING" id="4932.YDL007W"/>
<dbReference type="iPTMnet" id="P40327"/>
<dbReference type="PaxDb" id="4932-YDL007W"/>
<dbReference type="PeptideAtlas" id="P40327"/>
<dbReference type="EnsemblFungi" id="YDL007W_mRNA">
    <property type="protein sequence ID" value="YDL007W"/>
    <property type="gene ID" value="YDL007W"/>
</dbReference>
<dbReference type="GeneID" id="851557"/>
<dbReference type="KEGG" id="sce:YDL007W"/>
<dbReference type="AGR" id="SGD:S000002165"/>
<dbReference type="SGD" id="S000002165">
    <property type="gene designation" value="RPT2"/>
</dbReference>
<dbReference type="VEuPathDB" id="FungiDB:YDL007W"/>
<dbReference type="eggNOG" id="KOG0726">
    <property type="taxonomic scope" value="Eukaryota"/>
</dbReference>
<dbReference type="GeneTree" id="ENSGT01020000230346"/>
<dbReference type="HOGENOM" id="CLU_000688_2_3_1"/>
<dbReference type="InParanoid" id="P40327"/>
<dbReference type="OMA" id="QDDTDPM"/>
<dbReference type="OrthoDB" id="10255768at2759"/>
<dbReference type="BioCyc" id="YEAST:G3O-29438-MONOMER"/>
<dbReference type="BRENDA" id="5.6.1.5">
    <property type="organism ID" value="984"/>
</dbReference>
<dbReference type="Reactome" id="R-SCE-1236978">
    <property type="pathway name" value="Cross-presentation of soluble exogenous antigens (endosomes)"/>
</dbReference>
<dbReference type="Reactome" id="R-SCE-5668541">
    <property type="pathway name" value="TNFR2 non-canonical NF-kB pathway"/>
</dbReference>
<dbReference type="Reactome" id="R-SCE-5687128">
    <property type="pathway name" value="MAPK6/MAPK4 signaling"/>
</dbReference>
<dbReference type="Reactome" id="R-SCE-5689880">
    <property type="pathway name" value="Ub-specific processing proteases"/>
</dbReference>
<dbReference type="Reactome" id="R-SCE-68949">
    <property type="pathway name" value="Orc1 removal from chromatin"/>
</dbReference>
<dbReference type="Reactome" id="R-SCE-69017">
    <property type="pathway name" value="CDK-mediated phosphorylation and removal of Cdc6"/>
</dbReference>
<dbReference type="Reactome" id="R-SCE-69601">
    <property type="pathway name" value="Ubiquitin Mediated Degradation of Phosphorylated Cdc25A"/>
</dbReference>
<dbReference type="Reactome" id="R-SCE-8854050">
    <property type="pathway name" value="FBXL7 down-regulates AURKA during mitotic entry and in early mitosis"/>
</dbReference>
<dbReference type="Reactome" id="R-SCE-8948751">
    <property type="pathway name" value="Regulation of PTEN stability and activity"/>
</dbReference>
<dbReference type="Reactome" id="R-SCE-8951664">
    <property type="pathway name" value="Neddylation"/>
</dbReference>
<dbReference type="Reactome" id="R-SCE-9755511">
    <property type="pathway name" value="KEAP1-NFE2L2 pathway"/>
</dbReference>
<dbReference type="Reactome" id="R-SCE-983168">
    <property type="pathway name" value="Antigen processing: Ubiquitination &amp; Proteasome degradation"/>
</dbReference>
<dbReference type="Reactome" id="R-SCE-9907900">
    <property type="pathway name" value="Proteasome assembly"/>
</dbReference>
<dbReference type="BioGRID-ORCS" id="851557">
    <property type="hits" value="3 hits in 10 CRISPR screens"/>
</dbReference>
<dbReference type="EvolutionaryTrace" id="P40327"/>
<dbReference type="PRO" id="PR:P40327"/>
<dbReference type="Proteomes" id="UP000002311">
    <property type="component" value="Chromosome IV"/>
</dbReference>
<dbReference type="RNAct" id="P40327">
    <property type="molecule type" value="protein"/>
</dbReference>
<dbReference type="GO" id="GO:0005737">
    <property type="term" value="C:cytoplasm"/>
    <property type="evidence" value="ECO:0007669"/>
    <property type="project" value="UniProtKB-SubCell"/>
</dbReference>
<dbReference type="GO" id="GO:0005634">
    <property type="term" value="C:nucleus"/>
    <property type="evidence" value="ECO:0000314"/>
    <property type="project" value="SGD"/>
</dbReference>
<dbReference type="GO" id="GO:0000502">
    <property type="term" value="C:proteasome complex"/>
    <property type="evidence" value="ECO:0000353"/>
    <property type="project" value="ComplexPortal"/>
</dbReference>
<dbReference type="GO" id="GO:0008540">
    <property type="term" value="C:proteasome regulatory particle, base subcomplex"/>
    <property type="evidence" value="ECO:0000314"/>
    <property type="project" value="SGD"/>
</dbReference>
<dbReference type="GO" id="GO:0005524">
    <property type="term" value="F:ATP binding"/>
    <property type="evidence" value="ECO:0007669"/>
    <property type="project" value="UniProtKB-KW"/>
</dbReference>
<dbReference type="GO" id="GO:0016887">
    <property type="term" value="F:ATP hydrolysis activity"/>
    <property type="evidence" value="ECO:0000314"/>
    <property type="project" value="SGD"/>
</dbReference>
<dbReference type="GO" id="GO:0036402">
    <property type="term" value="F:proteasome-activating activity"/>
    <property type="evidence" value="ECO:0000315"/>
    <property type="project" value="SGD"/>
</dbReference>
<dbReference type="GO" id="GO:0070651">
    <property type="term" value="P:nonfunctional rRNA decay"/>
    <property type="evidence" value="ECO:0000315"/>
    <property type="project" value="SGD"/>
</dbReference>
<dbReference type="GO" id="GO:0043171">
    <property type="term" value="P:peptide catabolic process"/>
    <property type="evidence" value="ECO:0000315"/>
    <property type="project" value="SGD"/>
</dbReference>
<dbReference type="GO" id="GO:0045732">
    <property type="term" value="P:positive regulation of protein catabolic process"/>
    <property type="evidence" value="ECO:0000314"/>
    <property type="project" value="SGD"/>
</dbReference>
<dbReference type="GO" id="GO:0070682">
    <property type="term" value="P:proteasome regulatory particle assembly"/>
    <property type="evidence" value="ECO:0000315"/>
    <property type="project" value="SGD"/>
</dbReference>
<dbReference type="GO" id="GO:0043161">
    <property type="term" value="P:proteasome-mediated ubiquitin-dependent protein catabolic process"/>
    <property type="evidence" value="ECO:0000314"/>
    <property type="project" value="ComplexPortal"/>
</dbReference>
<dbReference type="GO" id="GO:0031503">
    <property type="term" value="P:protein-containing complex localization"/>
    <property type="evidence" value="ECO:0000315"/>
    <property type="project" value="SGD"/>
</dbReference>
<dbReference type="GO" id="GO:0006511">
    <property type="term" value="P:ubiquitin-dependent protein catabolic process"/>
    <property type="evidence" value="ECO:0000315"/>
    <property type="project" value="SGD"/>
</dbReference>
<dbReference type="FunFam" id="2.40.50.140:FF:000030">
    <property type="entry name" value="26S protease regulatory subunit 4"/>
    <property type="match status" value="1"/>
</dbReference>
<dbReference type="FunFam" id="1.10.8.60:FF:000007">
    <property type="entry name" value="26S proteasome regulatory subunit 4"/>
    <property type="match status" value="1"/>
</dbReference>
<dbReference type="FunFam" id="3.40.50.300:FF:000039">
    <property type="entry name" value="26S proteasome regulatory subunit 4"/>
    <property type="match status" value="1"/>
</dbReference>
<dbReference type="Gene3D" id="1.10.8.60">
    <property type="match status" value="1"/>
</dbReference>
<dbReference type="Gene3D" id="2.40.50.140">
    <property type="entry name" value="Nucleic acid-binding proteins"/>
    <property type="match status" value="1"/>
</dbReference>
<dbReference type="Gene3D" id="3.40.50.300">
    <property type="entry name" value="P-loop containing nucleotide triphosphate hydrolases"/>
    <property type="match status" value="1"/>
</dbReference>
<dbReference type="InterPro" id="IPR050221">
    <property type="entry name" value="26S_Proteasome_ATPase"/>
</dbReference>
<dbReference type="InterPro" id="IPR003593">
    <property type="entry name" value="AAA+_ATPase"/>
</dbReference>
<dbReference type="InterPro" id="IPR041569">
    <property type="entry name" value="AAA_lid_3"/>
</dbReference>
<dbReference type="InterPro" id="IPR003959">
    <property type="entry name" value="ATPase_AAA_core"/>
</dbReference>
<dbReference type="InterPro" id="IPR003960">
    <property type="entry name" value="ATPase_AAA_CS"/>
</dbReference>
<dbReference type="InterPro" id="IPR012340">
    <property type="entry name" value="NA-bd_OB-fold"/>
</dbReference>
<dbReference type="InterPro" id="IPR027417">
    <property type="entry name" value="P-loop_NTPase"/>
</dbReference>
<dbReference type="InterPro" id="IPR032501">
    <property type="entry name" value="Prot_ATP_ID_OB_2nd"/>
</dbReference>
<dbReference type="PANTHER" id="PTHR23073">
    <property type="entry name" value="26S PROTEASOME REGULATORY SUBUNIT"/>
    <property type="match status" value="1"/>
</dbReference>
<dbReference type="Pfam" id="PF00004">
    <property type="entry name" value="AAA"/>
    <property type="match status" value="1"/>
</dbReference>
<dbReference type="Pfam" id="PF17862">
    <property type="entry name" value="AAA_lid_3"/>
    <property type="match status" value="1"/>
</dbReference>
<dbReference type="Pfam" id="PF16450">
    <property type="entry name" value="Prot_ATP_ID_OB_C"/>
    <property type="match status" value="1"/>
</dbReference>
<dbReference type="SMART" id="SM00382">
    <property type="entry name" value="AAA"/>
    <property type="match status" value="1"/>
</dbReference>
<dbReference type="SUPFAM" id="SSF52540">
    <property type="entry name" value="P-loop containing nucleoside triphosphate hydrolases"/>
    <property type="match status" value="1"/>
</dbReference>
<dbReference type="PROSITE" id="PS00674">
    <property type="entry name" value="AAA"/>
    <property type="match status" value="1"/>
</dbReference>
<evidence type="ECO:0000250" key="1"/>
<evidence type="ECO:0000255" key="2"/>
<evidence type="ECO:0000256" key="3">
    <source>
        <dbReference type="SAM" id="MobiDB-lite"/>
    </source>
</evidence>
<evidence type="ECO:0000269" key="4">
    <source>
    </source>
</evidence>
<evidence type="ECO:0000269" key="5">
    <source>
    </source>
</evidence>
<evidence type="ECO:0000305" key="6"/>
<evidence type="ECO:0007744" key="7">
    <source>
    </source>
</evidence>
<keyword id="KW-0002">3D-structure</keyword>
<keyword id="KW-0067">ATP-binding</keyword>
<keyword id="KW-0963">Cytoplasm</keyword>
<keyword id="KW-0903">Direct protein sequencing</keyword>
<keyword id="KW-1017">Isopeptide bond</keyword>
<keyword id="KW-0449">Lipoprotein</keyword>
<keyword id="KW-0519">Myristate</keyword>
<keyword id="KW-0547">Nucleotide-binding</keyword>
<keyword id="KW-0539">Nucleus</keyword>
<keyword id="KW-0647">Proteasome</keyword>
<keyword id="KW-1185">Reference proteome</keyword>
<keyword id="KW-0832">Ubl conjugation</keyword>
<protein>
    <recommendedName>
        <fullName>26S proteasome regulatory subunit 4 homolog</fullName>
    </recommendedName>
    <alternativeName>
        <fullName>Tat-binding homolog 5</fullName>
    </alternativeName>
</protein>
<organism>
    <name type="scientific">Saccharomyces cerevisiae (strain ATCC 204508 / S288c)</name>
    <name type="common">Baker's yeast</name>
    <dbReference type="NCBI Taxonomy" id="559292"/>
    <lineage>
        <taxon>Eukaryota</taxon>
        <taxon>Fungi</taxon>
        <taxon>Dikarya</taxon>
        <taxon>Ascomycota</taxon>
        <taxon>Saccharomycotina</taxon>
        <taxon>Saccharomycetes</taxon>
        <taxon>Saccharomycetales</taxon>
        <taxon>Saccharomycetaceae</taxon>
        <taxon>Saccharomyces</taxon>
    </lineage>
</organism>
<reference key="1">
    <citation type="journal article" date="1994" name="Yeast">
        <title>Identification of a set of yeast genes coding for a novel family of putative ATPases with high similarity to constituents of the 26S protease complex.</title>
        <authorList>
            <person name="Schnall R."/>
            <person name="Mannhaupt G."/>
            <person name="Stucka R."/>
            <person name="Tauer R."/>
            <person name="Ehnle S."/>
            <person name="Schwarzlose C."/>
            <person name="Vetter I."/>
            <person name="Feldmann H."/>
        </authorList>
    </citation>
    <scope>NUCLEOTIDE SEQUENCE [GENOMIC DNA]</scope>
    <source>
        <strain>ATCC 204508 / S288c</strain>
    </source>
</reference>
<reference key="2">
    <citation type="journal article" date="1995" name="J. Biol. Chem.">
        <title>Cloning and expression of a yeast gene encoding a protein with ATPase activity and high identity to the subunit 4 of the human 26 S protease.</title>
        <authorList>
            <person name="Lucero H.A."/>
            <person name="Chojnicki E.W.T."/>
            <person name="Mandiyan S."/>
            <person name="Nelson H."/>
            <person name="Nelson N."/>
        </authorList>
    </citation>
    <scope>NUCLEOTIDE SEQUENCE [GENOMIC DNA]</scope>
    <scope>MUTAGENESIS OF LYS-229</scope>
    <source>
        <strain>ATCC 200060 / W303</strain>
    </source>
</reference>
<reference key="3">
    <citation type="journal article" date="1997" name="Nature">
        <title>The nucleotide sequence of Saccharomyces cerevisiae chromosome IV.</title>
        <authorList>
            <person name="Jacq C."/>
            <person name="Alt-Moerbe J."/>
            <person name="Andre B."/>
            <person name="Arnold W."/>
            <person name="Bahr A."/>
            <person name="Ballesta J.P.G."/>
            <person name="Bargues M."/>
            <person name="Baron L."/>
            <person name="Becker A."/>
            <person name="Biteau N."/>
            <person name="Bloecker H."/>
            <person name="Blugeon C."/>
            <person name="Boskovic J."/>
            <person name="Brandt P."/>
            <person name="Brueckner M."/>
            <person name="Buitrago M.J."/>
            <person name="Coster F."/>
            <person name="Delaveau T."/>
            <person name="del Rey F."/>
            <person name="Dujon B."/>
            <person name="Eide L.G."/>
            <person name="Garcia-Cantalejo J.M."/>
            <person name="Goffeau A."/>
            <person name="Gomez-Peris A."/>
            <person name="Granotier C."/>
            <person name="Hanemann V."/>
            <person name="Hankeln T."/>
            <person name="Hoheisel J.D."/>
            <person name="Jaeger W."/>
            <person name="Jimenez A."/>
            <person name="Jonniaux J.-L."/>
            <person name="Kraemer C."/>
            <person name="Kuester H."/>
            <person name="Laamanen P."/>
            <person name="Legros Y."/>
            <person name="Louis E.J."/>
            <person name="Moeller-Rieker S."/>
            <person name="Monnet A."/>
            <person name="Moro M."/>
            <person name="Mueller-Auer S."/>
            <person name="Nussbaumer B."/>
            <person name="Paricio N."/>
            <person name="Paulin L."/>
            <person name="Perea J."/>
            <person name="Perez-Alonso M."/>
            <person name="Perez-Ortin J.E."/>
            <person name="Pohl T.M."/>
            <person name="Prydz H."/>
            <person name="Purnelle B."/>
            <person name="Rasmussen S.W."/>
            <person name="Remacha M.A."/>
            <person name="Revuelta J.L."/>
            <person name="Rieger M."/>
            <person name="Salom D."/>
            <person name="Saluz H.P."/>
            <person name="Saiz J.E."/>
            <person name="Saren A.-M."/>
            <person name="Schaefer M."/>
            <person name="Scharfe M."/>
            <person name="Schmidt E.R."/>
            <person name="Schneider C."/>
            <person name="Scholler P."/>
            <person name="Schwarz S."/>
            <person name="Soler-Mira A."/>
            <person name="Urrestarazu L.A."/>
            <person name="Verhasselt P."/>
            <person name="Vissers S."/>
            <person name="Voet M."/>
            <person name="Volckaert G."/>
            <person name="Wagner G."/>
            <person name="Wambutt R."/>
            <person name="Wedler E."/>
            <person name="Wedler H."/>
            <person name="Woelfl S."/>
            <person name="Harris D.E."/>
            <person name="Bowman S."/>
            <person name="Brown D."/>
            <person name="Churcher C.M."/>
            <person name="Connor R."/>
            <person name="Dedman K."/>
            <person name="Gentles S."/>
            <person name="Hamlin N."/>
            <person name="Hunt S."/>
            <person name="Jones L."/>
            <person name="McDonald S."/>
            <person name="Murphy L.D."/>
            <person name="Niblett D."/>
            <person name="Odell C."/>
            <person name="Oliver K."/>
            <person name="Rajandream M.A."/>
            <person name="Richards C."/>
            <person name="Shore L."/>
            <person name="Walsh S.V."/>
            <person name="Barrell B.G."/>
            <person name="Dietrich F.S."/>
            <person name="Mulligan J.T."/>
            <person name="Allen E."/>
            <person name="Araujo R."/>
            <person name="Aviles E."/>
            <person name="Berno A."/>
            <person name="Carpenter J."/>
            <person name="Chen E."/>
            <person name="Cherry J.M."/>
            <person name="Chung E."/>
            <person name="Duncan M."/>
            <person name="Hunicke-Smith S."/>
            <person name="Hyman R.W."/>
            <person name="Komp C."/>
            <person name="Lashkari D."/>
            <person name="Lew H."/>
            <person name="Lin D."/>
            <person name="Mosedale D."/>
            <person name="Nakahara K."/>
            <person name="Namath A."/>
            <person name="Oefner P."/>
            <person name="Oh C."/>
            <person name="Petel F.X."/>
            <person name="Roberts D."/>
            <person name="Schramm S."/>
            <person name="Schroeder M."/>
            <person name="Shogren T."/>
            <person name="Shroff N."/>
            <person name="Winant A."/>
            <person name="Yelton M.A."/>
            <person name="Botstein D."/>
            <person name="Davis R.W."/>
            <person name="Johnston M."/>
            <person name="Andrews S."/>
            <person name="Brinkman R."/>
            <person name="Cooper J."/>
            <person name="Ding H."/>
            <person name="Du Z."/>
            <person name="Favello A."/>
            <person name="Fulton L."/>
            <person name="Gattung S."/>
            <person name="Greco T."/>
            <person name="Hallsworth K."/>
            <person name="Hawkins J."/>
            <person name="Hillier L.W."/>
            <person name="Jier M."/>
            <person name="Johnson D."/>
            <person name="Johnston L."/>
            <person name="Kirsten J."/>
            <person name="Kucaba T."/>
            <person name="Langston Y."/>
            <person name="Latreille P."/>
            <person name="Le T."/>
            <person name="Mardis E."/>
            <person name="Menezes S."/>
            <person name="Miller N."/>
            <person name="Nhan M."/>
            <person name="Pauley A."/>
            <person name="Peluso D."/>
            <person name="Rifkin L."/>
            <person name="Riles L."/>
            <person name="Taich A."/>
            <person name="Trevaskis E."/>
            <person name="Vignati D."/>
            <person name="Wilcox L."/>
            <person name="Wohldman P."/>
            <person name="Vaudin M."/>
            <person name="Wilson R."/>
            <person name="Waterston R."/>
            <person name="Albermann K."/>
            <person name="Hani J."/>
            <person name="Heumann K."/>
            <person name="Kleine K."/>
            <person name="Mewes H.-W."/>
            <person name="Zollner A."/>
            <person name="Zaccaria P."/>
        </authorList>
    </citation>
    <scope>NUCLEOTIDE SEQUENCE [LARGE SCALE GENOMIC DNA]</scope>
    <source>
        <strain>ATCC 204508 / S288c</strain>
    </source>
</reference>
<reference key="4">
    <citation type="journal article" date="2014" name="G3 (Bethesda)">
        <title>The reference genome sequence of Saccharomyces cerevisiae: Then and now.</title>
        <authorList>
            <person name="Engel S.R."/>
            <person name="Dietrich F.S."/>
            <person name="Fisk D.G."/>
            <person name="Binkley G."/>
            <person name="Balakrishnan R."/>
            <person name="Costanzo M.C."/>
            <person name="Dwight S.S."/>
            <person name="Hitz B.C."/>
            <person name="Karra K."/>
            <person name="Nash R.S."/>
            <person name="Weng S."/>
            <person name="Wong E.D."/>
            <person name="Lloyd P."/>
            <person name="Skrzypek M.S."/>
            <person name="Miyasato S.R."/>
            <person name="Simison M."/>
            <person name="Cherry J.M."/>
        </authorList>
    </citation>
    <scope>GENOME REANNOTATION</scope>
    <source>
        <strain>ATCC 204508 / S288c</strain>
    </source>
</reference>
<reference key="5">
    <citation type="journal article" date="2003" name="Arch. Biochem. Biophys.">
        <title>N-terminal modifications of the 19S regulatory particle subunits of the yeast proteasome.</title>
        <authorList>
            <person name="Kimura Y."/>
            <person name="Saeki Y."/>
            <person name="Yokosawa H."/>
            <person name="Polevoda B."/>
            <person name="Sherman F."/>
            <person name="Hirano H."/>
        </authorList>
    </citation>
    <scope>PROTEIN SEQUENCE OF 2-11</scope>
    <scope>MYRISTOYLATION AT GLY-2</scope>
</reference>
<reference key="6">
    <citation type="journal article" date="2007" name="J. Proteome Res.">
        <title>Large-scale phosphorylation analysis of alpha-factor-arrested Saccharomyces cerevisiae.</title>
        <authorList>
            <person name="Li X."/>
            <person name="Gerber S.A."/>
            <person name="Rudner A.D."/>
            <person name="Beausoleil S.A."/>
            <person name="Haas W."/>
            <person name="Villen J."/>
            <person name="Elias J.E."/>
            <person name="Gygi S.P."/>
        </authorList>
    </citation>
    <scope>IDENTIFICATION BY MASS SPECTROMETRY [LARGE SCALE ANALYSIS]</scope>
    <source>
        <strain>ADR376</strain>
    </source>
</reference>
<reference key="7">
    <citation type="journal article" date="2008" name="Mol. Cell. Proteomics">
        <title>A multidimensional chromatography technology for in-depth phosphoproteome analysis.</title>
        <authorList>
            <person name="Albuquerque C.P."/>
            <person name="Smolka M.B."/>
            <person name="Payne S.H."/>
            <person name="Bafna V."/>
            <person name="Eng J."/>
            <person name="Zhou H."/>
        </authorList>
    </citation>
    <scope>IDENTIFICATION BY MASS SPECTROMETRY [LARGE SCALE ANALYSIS]</scope>
</reference>
<reference key="8">
    <citation type="journal article" date="2012" name="Proteomics">
        <title>Sites of ubiquitin attachment in Saccharomyces cerevisiae.</title>
        <authorList>
            <person name="Starita L.M."/>
            <person name="Lo R.S."/>
            <person name="Eng J.K."/>
            <person name="von Haller P.D."/>
            <person name="Fields S."/>
        </authorList>
    </citation>
    <scope>UBIQUITINATION [LARGE SCALE ANALYSIS] AT LYS-234; LYS-255 AND LYS-290</scope>
    <scope>IDENTIFICATION BY MASS SPECTROMETRY [LARGE SCALE ANALYSIS]</scope>
</reference>
<reference key="9">
    <citation type="journal article" date="2012" name="Proc. Natl. Acad. Sci. U.S.A.">
        <title>Near-atomic resolution structural model of the yeast 26S proteasome.</title>
        <authorList>
            <person name="Beck F."/>
            <person name="Unverdorben P."/>
            <person name="Bohn S."/>
            <person name="Schweitzer A."/>
            <person name="Pfeifer G."/>
            <person name="Sakata E."/>
            <person name="Nickell S."/>
            <person name="Plitzko J.M."/>
            <person name="Villa E."/>
            <person name="Baumeister W."/>
            <person name="Forster F."/>
        </authorList>
    </citation>
    <scope>STRUCTURE BY ELECTRON MICROSCOPY (7.4 ANGSTROMS) OF THE 26S PROTEASOME</scope>
</reference>
<comment type="function">
    <text evidence="1">The 26S proteasome is involved in the ATP-dependent degradation of ubiquitinated proteins. The regulatory (or ATPase) complex confers ATP dependency and substrate specificity to the 26S complex (By similarity). Has ATPase activity.</text>
</comment>
<comment type="interaction">
    <interactant intactId="EBI-13901">
        <id>P40327</id>
    </interactant>
    <interactant intactId="EBI-15913">
        <id>P38764</id>
        <label>RPN1</label>
    </interactant>
    <organismsDiffer>false</organismsDiffer>
    <experiments>7</experiments>
</comment>
<comment type="interaction">
    <interactant intactId="EBI-13901">
        <id>P40327</id>
    </interactant>
    <interactant intactId="EBI-11219">
        <id>P43588</id>
        <label>RPN11</label>
    </interactant>
    <organismsDiffer>false</organismsDiffer>
    <experiments>3</experiments>
</comment>
<comment type="interaction">
    <interactant intactId="EBI-13901">
        <id>P40327</id>
    </interactant>
    <interactant intactId="EBI-13910">
        <id>P33299</id>
        <label>RPT1</label>
    </interactant>
    <organismsDiffer>false</organismsDiffer>
    <experiments>10</experiments>
</comment>
<comment type="subcellular location">
    <subcellularLocation>
        <location evidence="6">Cytoplasm</location>
    </subcellularLocation>
    <subcellularLocation>
        <location evidence="6">Nucleus</location>
    </subcellularLocation>
</comment>
<comment type="similarity">
    <text evidence="6">Belongs to the AAA ATPase family.</text>
</comment>